<protein>
    <recommendedName>
        <fullName evidence="1">tRNA N6-adenosine threonylcarbamoyltransferase</fullName>
        <ecNumber evidence="1">2.3.1.234</ecNumber>
    </recommendedName>
    <alternativeName>
        <fullName evidence="1">N6-L-threonylcarbamoyladenine synthase</fullName>
        <shortName evidence="1">t(6)A synthase</shortName>
    </alternativeName>
    <alternativeName>
        <fullName evidence="1">t(6)A37 threonylcarbamoyladenosine biosynthesis protein TsaD</fullName>
    </alternativeName>
    <alternativeName>
        <fullName evidence="1">tRNA threonylcarbamoyladenosine biosynthesis protein TsaD</fullName>
    </alternativeName>
</protein>
<name>TSAD_SALPK</name>
<comment type="function">
    <text evidence="1">Required for the formation of a threonylcarbamoyl group on adenosine at position 37 (t(6)A37) in tRNAs that read codons beginning with adenine. Is involved in the transfer of the threonylcarbamoyl moiety of threonylcarbamoyl-AMP (TC-AMP) to the N6 group of A37, together with TsaE and TsaB. TsaD likely plays a direct catalytic role in this reaction.</text>
</comment>
<comment type="catalytic activity">
    <reaction evidence="1">
        <text>L-threonylcarbamoyladenylate + adenosine(37) in tRNA = N(6)-L-threonylcarbamoyladenosine(37) in tRNA + AMP + H(+)</text>
        <dbReference type="Rhea" id="RHEA:37059"/>
        <dbReference type="Rhea" id="RHEA-COMP:10162"/>
        <dbReference type="Rhea" id="RHEA-COMP:10163"/>
        <dbReference type="ChEBI" id="CHEBI:15378"/>
        <dbReference type="ChEBI" id="CHEBI:73682"/>
        <dbReference type="ChEBI" id="CHEBI:74411"/>
        <dbReference type="ChEBI" id="CHEBI:74418"/>
        <dbReference type="ChEBI" id="CHEBI:456215"/>
        <dbReference type="EC" id="2.3.1.234"/>
    </reaction>
</comment>
<comment type="cofactor">
    <cofactor evidence="1">
        <name>Fe(2+)</name>
        <dbReference type="ChEBI" id="CHEBI:29033"/>
    </cofactor>
    <text evidence="1">Binds 1 Fe(2+) ion per subunit.</text>
</comment>
<comment type="subcellular location">
    <subcellularLocation>
        <location evidence="1">Cytoplasm</location>
    </subcellularLocation>
</comment>
<comment type="similarity">
    <text evidence="1">Belongs to the KAE1 / TsaD family.</text>
</comment>
<sequence>MRVLGIETSCDETGIAIYDDKKGLLANQLYSQVKLHADYGGVVPELASRDHVRKTVPLIQAALKEAGLTASDIDAVAYTAGPGLVGALLVGATVGRSLAFAWNVPAIPVHHMEGHLLAPMLEDNPPDFPFVALLVSGGHTQLISVTGIGQYELLGESIDDAAGEAFDKTAKLLGLDYPGGPMLSKMASQGTAGRFVFPRPMTDRPGLDFSFSGLKTFAANTIRSNGDDEQTRADIARAFEDAVVDTLMIKCKRALESTGFKRLVMAGGVSANRTLRAKLAEMMQKRRGEVFYARPEFCTDNGAMIAYAGMVRFKAGVTADLGVTVRPRWPLAELPAA</sequence>
<feature type="chain" id="PRO_1000146020" description="tRNA N6-adenosine threonylcarbamoyltransferase">
    <location>
        <begin position="1"/>
        <end position="337"/>
    </location>
</feature>
<feature type="binding site" evidence="1">
    <location>
        <position position="111"/>
    </location>
    <ligand>
        <name>Fe cation</name>
        <dbReference type="ChEBI" id="CHEBI:24875"/>
    </ligand>
</feature>
<feature type="binding site" evidence="1">
    <location>
        <position position="115"/>
    </location>
    <ligand>
        <name>Fe cation</name>
        <dbReference type="ChEBI" id="CHEBI:24875"/>
    </ligand>
</feature>
<feature type="binding site" evidence="1">
    <location>
        <begin position="134"/>
        <end position="138"/>
    </location>
    <ligand>
        <name>substrate</name>
    </ligand>
</feature>
<feature type="binding site" evidence="1">
    <location>
        <position position="167"/>
    </location>
    <ligand>
        <name>substrate</name>
    </ligand>
</feature>
<feature type="binding site" evidence="1">
    <location>
        <position position="180"/>
    </location>
    <ligand>
        <name>substrate</name>
    </ligand>
</feature>
<feature type="binding site" evidence="1">
    <location>
        <position position="272"/>
    </location>
    <ligand>
        <name>substrate</name>
    </ligand>
</feature>
<feature type="binding site" evidence="1">
    <location>
        <position position="300"/>
    </location>
    <ligand>
        <name>Fe cation</name>
        <dbReference type="ChEBI" id="CHEBI:24875"/>
    </ligand>
</feature>
<gene>
    <name evidence="1" type="primary">tsaD</name>
    <name type="synonym">gcp</name>
    <name type="ordered locus">SSPA2873</name>
</gene>
<organism>
    <name type="scientific">Salmonella paratyphi A (strain AKU_12601)</name>
    <dbReference type="NCBI Taxonomy" id="554290"/>
    <lineage>
        <taxon>Bacteria</taxon>
        <taxon>Pseudomonadati</taxon>
        <taxon>Pseudomonadota</taxon>
        <taxon>Gammaproteobacteria</taxon>
        <taxon>Enterobacterales</taxon>
        <taxon>Enterobacteriaceae</taxon>
        <taxon>Salmonella</taxon>
    </lineage>
</organism>
<reference key="1">
    <citation type="journal article" date="2009" name="BMC Genomics">
        <title>Pseudogene accumulation in the evolutionary histories of Salmonella enterica serovars Paratyphi A and Typhi.</title>
        <authorList>
            <person name="Holt K.E."/>
            <person name="Thomson N.R."/>
            <person name="Wain J."/>
            <person name="Langridge G.C."/>
            <person name="Hasan R."/>
            <person name="Bhutta Z.A."/>
            <person name="Quail M.A."/>
            <person name="Norbertczak H."/>
            <person name="Walker D."/>
            <person name="Simmonds M."/>
            <person name="White B."/>
            <person name="Bason N."/>
            <person name="Mungall K."/>
            <person name="Dougan G."/>
            <person name="Parkhill J."/>
        </authorList>
    </citation>
    <scope>NUCLEOTIDE SEQUENCE [LARGE SCALE GENOMIC DNA]</scope>
    <source>
        <strain>AKU_12601</strain>
    </source>
</reference>
<evidence type="ECO:0000255" key="1">
    <source>
        <dbReference type="HAMAP-Rule" id="MF_01445"/>
    </source>
</evidence>
<keyword id="KW-0012">Acyltransferase</keyword>
<keyword id="KW-0963">Cytoplasm</keyword>
<keyword id="KW-0408">Iron</keyword>
<keyword id="KW-0479">Metal-binding</keyword>
<keyword id="KW-0808">Transferase</keyword>
<keyword id="KW-0819">tRNA processing</keyword>
<accession>B5BG20</accession>
<dbReference type="EC" id="2.3.1.234" evidence="1"/>
<dbReference type="EMBL" id="FM200053">
    <property type="protein sequence ID" value="CAR61120.1"/>
    <property type="molecule type" value="Genomic_DNA"/>
</dbReference>
<dbReference type="RefSeq" id="WP_001264389.1">
    <property type="nucleotide sequence ID" value="NC_011147.1"/>
</dbReference>
<dbReference type="SMR" id="B5BG20"/>
<dbReference type="KEGG" id="sek:SSPA2873"/>
<dbReference type="HOGENOM" id="CLU_023208_0_0_6"/>
<dbReference type="Proteomes" id="UP000001869">
    <property type="component" value="Chromosome"/>
</dbReference>
<dbReference type="GO" id="GO:0005737">
    <property type="term" value="C:cytoplasm"/>
    <property type="evidence" value="ECO:0007669"/>
    <property type="project" value="UniProtKB-SubCell"/>
</dbReference>
<dbReference type="GO" id="GO:0005506">
    <property type="term" value="F:iron ion binding"/>
    <property type="evidence" value="ECO:0007669"/>
    <property type="project" value="UniProtKB-UniRule"/>
</dbReference>
<dbReference type="GO" id="GO:0061711">
    <property type="term" value="F:N(6)-L-threonylcarbamoyladenine synthase activity"/>
    <property type="evidence" value="ECO:0007669"/>
    <property type="project" value="UniProtKB-EC"/>
</dbReference>
<dbReference type="GO" id="GO:0002949">
    <property type="term" value="P:tRNA threonylcarbamoyladenosine modification"/>
    <property type="evidence" value="ECO:0007669"/>
    <property type="project" value="UniProtKB-UniRule"/>
</dbReference>
<dbReference type="CDD" id="cd24097">
    <property type="entry name" value="ASKHA_NBD_TsaD-like"/>
    <property type="match status" value="1"/>
</dbReference>
<dbReference type="FunFam" id="3.30.420.40:FF:000031">
    <property type="entry name" value="tRNA N6-adenosine threonylcarbamoyltransferase"/>
    <property type="match status" value="1"/>
</dbReference>
<dbReference type="Gene3D" id="3.30.420.40">
    <property type="match status" value="2"/>
</dbReference>
<dbReference type="HAMAP" id="MF_01445">
    <property type="entry name" value="TsaD"/>
    <property type="match status" value="1"/>
</dbReference>
<dbReference type="InterPro" id="IPR043129">
    <property type="entry name" value="ATPase_NBD"/>
</dbReference>
<dbReference type="InterPro" id="IPR000905">
    <property type="entry name" value="Gcp-like_dom"/>
</dbReference>
<dbReference type="InterPro" id="IPR017861">
    <property type="entry name" value="KAE1/TsaD"/>
</dbReference>
<dbReference type="InterPro" id="IPR017860">
    <property type="entry name" value="Peptidase_M22_CS"/>
</dbReference>
<dbReference type="InterPro" id="IPR022450">
    <property type="entry name" value="TsaD"/>
</dbReference>
<dbReference type="NCBIfam" id="TIGR00329">
    <property type="entry name" value="gcp_kae1"/>
    <property type="match status" value="1"/>
</dbReference>
<dbReference type="NCBIfam" id="TIGR03723">
    <property type="entry name" value="T6A_TsaD_YgjD"/>
    <property type="match status" value="1"/>
</dbReference>
<dbReference type="PANTHER" id="PTHR11735">
    <property type="entry name" value="TRNA N6-ADENOSINE THREONYLCARBAMOYLTRANSFERASE"/>
    <property type="match status" value="1"/>
</dbReference>
<dbReference type="PANTHER" id="PTHR11735:SF6">
    <property type="entry name" value="TRNA N6-ADENOSINE THREONYLCARBAMOYLTRANSFERASE, MITOCHONDRIAL"/>
    <property type="match status" value="1"/>
</dbReference>
<dbReference type="Pfam" id="PF00814">
    <property type="entry name" value="TsaD"/>
    <property type="match status" value="1"/>
</dbReference>
<dbReference type="PRINTS" id="PR00789">
    <property type="entry name" value="OSIALOPTASE"/>
</dbReference>
<dbReference type="SUPFAM" id="SSF53067">
    <property type="entry name" value="Actin-like ATPase domain"/>
    <property type="match status" value="1"/>
</dbReference>
<dbReference type="PROSITE" id="PS01016">
    <property type="entry name" value="GLYCOPROTEASE"/>
    <property type="match status" value="1"/>
</dbReference>
<proteinExistence type="inferred from homology"/>